<proteinExistence type="inferred from homology"/>
<comment type="function">
    <text evidence="1">The glycine cleavage system catalyzes the degradation of glycine.</text>
</comment>
<comment type="catalytic activity">
    <reaction evidence="1">
        <text>N(6)-[(R)-S(8)-aminomethyldihydrolipoyl]-L-lysyl-[protein] + (6S)-5,6,7,8-tetrahydrofolate = N(6)-[(R)-dihydrolipoyl]-L-lysyl-[protein] + (6R)-5,10-methylene-5,6,7,8-tetrahydrofolate + NH4(+)</text>
        <dbReference type="Rhea" id="RHEA:16945"/>
        <dbReference type="Rhea" id="RHEA-COMP:10475"/>
        <dbReference type="Rhea" id="RHEA-COMP:10492"/>
        <dbReference type="ChEBI" id="CHEBI:15636"/>
        <dbReference type="ChEBI" id="CHEBI:28938"/>
        <dbReference type="ChEBI" id="CHEBI:57453"/>
        <dbReference type="ChEBI" id="CHEBI:83100"/>
        <dbReference type="ChEBI" id="CHEBI:83143"/>
        <dbReference type="EC" id="2.1.2.10"/>
    </reaction>
</comment>
<comment type="subunit">
    <text evidence="1">The glycine cleavage system is composed of four proteins: P, T, L and H.</text>
</comment>
<comment type="similarity">
    <text evidence="1">Belongs to the GcvT family.</text>
</comment>
<sequence length="372" mass="40093">MTVLKTTPLHAAHRALNARMVDFGGWDMPVNYGSQIEEHQAVRTDAGMFDVSHMCVVDFTGPRVRAFFEHAIANNVAKLQTPGKALYSCLLNPQGGVIDDLIVYYFTEEFFRVVVNAGTAEKDIAWFNQLNEQGGFGLTIAPRRDFAIVAAQGPNARAKVWDTVPCARAATSELKPFNAAQVAGTPFGDLTVARTGYTGEDGFEIIVPATHVEALWNALAERGVRPCGLGARDTLRLEAGMNLYGQDMDESVSPLDAGLAWTVDLSAPRAFVGRDALEAHGSRAAFVGLILQKENGRAGGVLRAHQKVATPHGEGEITSGTFSPSMQESIAFARVPKDVAIGDTVHVQIRDKQLPARVVKLPFVRNGKVLAA</sequence>
<feature type="chain" id="PRO_1000047650" description="Aminomethyltransferase">
    <location>
        <begin position="1"/>
        <end position="372"/>
    </location>
</feature>
<organism>
    <name type="scientific">Burkholderia pseudomallei (strain 1106a)</name>
    <dbReference type="NCBI Taxonomy" id="357348"/>
    <lineage>
        <taxon>Bacteria</taxon>
        <taxon>Pseudomonadati</taxon>
        <taxon>Pseudomonadota</taxon>
        <taxon>Betaproteobacteria</taxon>
        <taxon>Burkholderiales</taxon>
        <taxon>Burkholderiaceae</taxon>
        <taxon>Burkholderia</taxon>
        <taxon>pseudomallei group</taxon>
    </lineage>
</organism>
<keyword id="KW-0032">Aminotransferase</keyword>
<keyword id="KW-0808">Transferase</keyword>
<protein>
    <recommendedName>
        <fullName evidence="1">Aminomethyltransferase</fullName>
        <ecNumber evidence="1">2.1.2.10</ecNumber>
    </recommendedName>
    <alternativeName>
        <fullName evidence="1">Glycine cleavage system T protein</fullName>
    </alternativeName>
</protein>
<evidence type="ECO:0000255" key="1">
    <source>
        <dbReference type="HAMAP-Rule" id="MF_00259"/>
    </source>
</evidence>
<gene>
    <name evidence="1" type="primary">gcvT</name>
    <name type="ordered locus">BURPS1106A_3997</name>
</gene>
<dbReference type="EC" id="2.1.2.10" evidence="1"/>
<dbReference type="EMBL" id="CP000572">
    <property type="protein sequence ID" value="ABN89016.1"/>
    <property type="molecule type" value="Genomic_DNA"/>
</dbReference>
<dbReference type="RefSeq" id="WP_004202927.1">
    <property type="nucleotide sequence ID" value="NC_009076.1"/>
</dbReference>
<dbReference type="SMR" id="A3P0U5"/>
<dbReference type="GeneID" id="93061983"/>
<dbReference type="KEGG" id="bpl:BURPS1106A_3997"/>
<dbReference type="HOGENOM" id="CLU_007884_10_2_4"/>
<dbReference type="Proteomes" id="UP000006738">
    <property type="component" value="Chromosome I"/>
</dbReference>
<dbReference type="GO" id="GO:0005829">
    <property type="term" value="C:cytosol"/>
    <property type="evidence" value="ECO:0007669"/>
    <property type="project" value="TreeGrafter"/>
</dbReference>
<dbReference type="GO" id="GO:0005960">
    <property type="term" value="C:glycine cleavage complex"/>
    <property type="evidence" value="ECO:0007669"/>
    <property type="project" value="InterPro"/>
</dbReference>
<dbReference type="GO" id="GO:0004047">
    <property type="term" value="F:aminomethyltransferase activity"/>
    <property type="evidence" value="ECO:0007669"/>
    <property type="project" value="UniProtKB-UniRule"/>
</dbReference>
<dbReference type="GO" id="GO:0008483">
    <property type="term" value="F:transaminase activity"/>
    <property type="evidence" value="ECO:0007669"/>
    <property type="project" value="UniProtKB-KW"/>
</dbReference>
<dbReference type="GO" id="GO:0019464">
    <property type="term" value="P:glycine decarboxylation via glycine cleavage system"/>
    <property type="evidence" value="ECO:0007669"/>
    <property type="project" value="UniProtKB-UniRule"/>
</dbReference>
<dbReference type="FunFam" id="3.30.70.1400:FF:000001">
    <property type="entry name" value="Aminomethyltransferase"/>
    <property type="match status" value="1"/>
</dbReference>
<dbReference type="FunFam" id="4.10.1250.10:FF:000001">
    <property type="entry name" value="Aminomethyltransferase"/>
    <property type="match status" value="1"/>
</dbReference>
<dbReference type="Gene3D" id="2.40.30.110">
    <property type="entry name" value="Aminomethyltransferase beta-barrel domains"/>
    <property type="match status" value="1"/>
</dbReference>
<dbReference type="Gene3D" id="3.30.70.1400">
    <property type="entry name" value="Aminomethyltransferase beta-barrel domains"/>
    <property type="match status" value="1"/>
</dbReference>
<dbReference type="Gene3D" id="4.10.1250.10">
    <property type="entry name" value="Aminomethyltransferase fragment"/>
    <property type="match status" value="1"/>
</dbReference>
<dbReference type="Gene3D" id="3.30.1360.120">
    <property type="entry name" value="Probable tRNA modification gtpase trme, domain 1"/>
    <property type="match status" value="1"/>
</dbReference>
<dbReference type="HAMAP" id="MF_00259">
    <property type="entry name" value="GcvT"/>
    <property type="match status" value="1"/>
</dbReference>
<dbReference type="InterPro" id="IPR006223">
    <property type="entry name" value="GCS_T"/>
</dbReference>
<dbReference type="InterPro" id="IPR022903">
    <property type="entry name" value="GCS_T_bac"/>
</dbReference>
<dbReference type="InterPro" id="IPR013977">
    <property type="entry name" value="GCST_C"/>
</dbReference>
<dbReference type="InterPro" id="IPR006222">
    <property type="entry name" value="GCV_T_N"/>
</dbReference>
<dbReference type="InterPro" id="IPR028896">
    <property type="entry name" value="GcvT/YgfZ/DmdA"/>
</dbReference>
<dbReference type="InterPro" id="IPR029043">
    <property type="entry name" value="GcvT/YgfZ_C"/>
</dbReference>
<dbReference type="InterPro" id="IPR027266">
    <property type="entry name" value="TrmE/GcvT_dom1"/>
</dbReference>
<dbReference type="NCBIfam" id="TIGR00528">
    <property type="entry name" value="gcvT"/>
    <property type="match status" value="1"/>
</dbReference>
<dbReference type="NCBIfam" id="NF001567">
    <property type="entry name" value="PRK00389.1"/>
    <property type="match status" value="1"/>
</dbReference>
<dbReference type="PANTHER" id="PTHR43757">
    <property type="entry name" value="AMINOMETHYLTRANSFERASE"/>
    <property type="match status" value="1"/>
</dbReference>
<dbReference type="PANTHER" id="PTHR43757:SF2">
    <property type="entry name" value="AMINOMETHYLTRANSFERASE, MITOCHONDRIAL"/>
    <property type="match status" value="1"/>
</dbReference>
<dbReference type="Pfam" id="PF01571">
    <property type="entry name" value="GCV_T"/>
    <property type="match status" value="1"/>
</dbReference>
<dbReference type="Pfam" id="PF08669">
    <property type="entry name" value="GCV_T_C"/>
    <property type="match status" value="1"/>
</dbReference>
<dbReference type="PIRSF" id="PIRSF006487">
    <property type="entry name" value="GcvT"/>
    <property type="match status" value="1"/>
</dbReference>
<dbReference type="SUPFAM" id="SSF101790">
    <property type="entry name" value="Aminomethyltransferase beta-barrel domain"/>
    <property type="match status" value="1"/>
</dbReference>
<dbReference type="SUPFAM" id="SSF103025">
    <property type="entry name" value="Folate-binding domain"/>
    <property type="match status" value="1"/>
</dbReference>
<reference key="1">
    <citation type="journal article" date="2010" name="Genome Biol. Evol.">
        <title>Continuing evolution of Burkholderia mallei through genome reduction and large-scale rearrangements.</title>
        <authorList>
            <person name="Losada L."/>
            <person name="Ronning C.M."/>
            <person name="DeShazer D."/>
            <person name="Woods D."/>
            <person name="Fedorova N."/>
            <person name="Kim H.S."/>
            <person name="Shabalina S.A."/>
            <person name="Pearson T.R."/>
            <person name="Brinkac L."/>
            <person name="Tan P."/>
            <person name="Nandi T."/>
            <person name="Crabtree J."/>
            <person name="Badger J."/>
            <person name="Beckstrom-Sternberg S."/>
            <person name="Saqib M."/>
            <person name="Schutzer S.E."/>
            <person name="Keim P."/>
            <person name="Nierman W.C."/>
        </authorList>
    </citation>
    <scope>NUCLEOTIDE SEQUENCE [LARGE SCALE GENOMIC DNA]</scope>
    <source>
        <strain>1106a</strain>
    </source>
</reference>
<name>GCST_BURP0</name>
<accession>A3P0U5</accession>